<organism>
    <name type="scientific">Phocaeicola vulgatus (strain ATCC 8482 / DSM 1447 / JCM 5826 / CCUG 4940 / NBRC 14291 / NCTC 11154)</name>
    <name type="common">Bacteroides vulgatus</name>
    <dbReference type="NCBI Taxonomy" id="435590"/>
    <lineage>
        <taxon>Bacteria</taxon>
        <taxon>Pseudomonadati</taxon>
        <taxon>Bacteroidota</taxon>
        <taxon>Bacteroidia</taxon>
        <taxon>Bacteroidales</taxon>
        <taxon>Bacteroidaceae</taxon>
        <taxon>Phocaeicola</taxon>
    </lineage>
</organism>
<dbReference type="EC" id="2.7.1.130" evidence="1"/>
<dbReference type="EMBL" id="CP000139">
    <property type="protein sequence ID" value="ABR39289.1"/>
    <property type="molecule type" value="Genomic_DNA"/>
</dbReference>
<dbReference type="RefSeq" id="WP_005845053.1">
    <property type="nucleotide sequence ID" value="NZ_CAXUBK010000050.1"/>
</dbReference>
<dbReference type="SMR" id="A6L0S5"/>
<dbReference type="STRING" id="435590.BVU_1603"/>
<dbReference type="PaxDb" id="435590-BVU_1603"/>
<dbReference type="GeneID" id="5302569"/>
<dbReference type="KEGG" id="bvu:BVU_1603"/>
<dbReference type="eggNOG" id="COG1663">
    <property type="taxonomic scope" value="Bacteria"/>
</dbReference>
<dbReference type="HOGENOM" id="CLU_038816_6_0_10"/>
<dbReference type="BioCyc" id="BVUL435590:G1G59-1688-MONOMER"/>
<dbReference type="UniPathway" id="UPA00359">
    <property type="reaction ID" value="UER00482"/>
</dbReference>
<dbReference type="Proteomes" id="UP000002861">
    <property type="component" value="Chromosome"/>
</dbReference>
<dbReference type="GO" id="GO:0005886">
    <property type="term" value="C:plasma membrane"/>
    <property type="evidence" value="ECO:0007669"/>
    <property type="project" value="TreeGrafter"/>
</dbReference>
<dbReference type="GO" id="GO:0005524">
    <property type="term" value="F:ATP binding"/>
    <property type="evidence" value="ECO:0007669"/>
    <property type="project" value="UniProtKB-UniRule"/>
</dbReference>
<dbReference type="GO" id="GO:0009029">
    <property type="term" value="F:tetraacyldisaccharide 4'-kinase activity"/>
    <property type="evidence" value="ECO:0007669"/>
    <property type="project" value="UniProtKB-UniRule"/>
</dbReference>
<dbReference type="GO" id="GO:0009245">
    <property type="term" value="P:lipid A biosynthetic process"/>
    <property type="evidence" value="ECO:0007669"/>
    <property type="project" value="UniProtKB-UniRule"/>
</dbReference>
<dbReference type="GO" id="GO:0009244">
    <property type="term" value="P:lipopolysaccharide core region biosynthetic process"/>
    <property type="evidence" value="ECO:0007669"/>
    <property type="project" value="TreeGrafter"/>
</dbReference>
<dbReference type="HAMAP" id="MF_00409">
    <property type="entry name" value="LpxK"/>
    <property type="match status" value="1"/>
</dbReference>
<dbReference type="InterPro" id="IPR003758">
    <property type="entry name" value="LpxK"/>
</dbReference>
<dbReference type="InterPro" id="IPR027417">
    <property type="entry name" value="P-loop_NTPase"/>
</dbReference>
<dbReference type="NCBIfam" id="TIGR00682">
    <property type="entry name" value="lpxK"/>
    <property type="match status" value="1"/>
</dbReference>
<dbReference type="PANTHER" id="PTHR42724">
    <property type="entry name" value="TETRAACYLDISACCHARIDE 4'-KINASE"/>
    <property type="match status" value="1"/>
</dbReference>
<dbReference type="PANTHER" id="PTHR42724:SF1">
    <property type="entry name" value="TETRAACYLDISACCHARIDE 4'-KINASE, MITOCHONDRIAL-RELATED"/>
    <property type="match status" value="1"/>
</dbReference>
<dbReference type="Pfam" id="PF02606">
    <property type="entry name" value="LpxK"/>
    <property type="match status" value="1"/>
</dbReference>
<dbReference type="SUPFAM" id="SSF52540">
    <property type="entry name" value="P-loop containing nucleoside triphosphate hydrolases"/>
    <property type="match status" value="1"/>
</dbReference>
<evidence type="ECO:0000255" key="1">
    <source>
        <dbReference type="HAMAP-Rule" id="MF_00409"/>
    </source>
</evidence>
<accession>A6L0S5</accession>
<protein>
    <recommendedName>
        <fullName evidence="1">Tetraacyldisaccharide 4'-kinase</fullName>
        <ecNumber evidence="1">2.7.1.130</ecNumber>
    </recommendedName>
    <alternativeName>
        <fullName evidence="1">Lipid A 4'-kinase</fullName>
    </alternativeName>
</protein>
<comment type="function">
    <text evidence="1">Transfers the gamma-phosphate of ATP to the 4'-position of a tetraacyldisaccharide 1-phosphate intermediate (termed DS-1-P) to form tetraacyldisaccharide 1,4'-bis-phosphate (lipid IVA).</text>
</comment>
<comment type="catalytic activity">
    <reaction evidence="1">
        <text>a lipid A disaccharide + ATP = a lipid IVA + ADP + H(+)</text>
        <dbReference type="Rhea" id="RHEA:67840"/>
        <dbReference type="ChEBI" id="CHEBI:15378"/>
        <dbReference type="ChEBI" id="CHEBI:30616"/>
        <dbReference type="ChEBI" id="CHEBI:176343"/>
        <dbReference type="ChEBI" id="CHEBI:176425"/>
        <dbReference type="ChEBI" id="CHEBI:456216"/>
        <dbReference type="EC" id="2.7.1.130"/>
    </reaction>
</comment>
<comment type="pathway">
    <text evidence="1">Glycolipid biosynthesis; lipid IV(A) biosynthesis; lipid IV(A) from (3R)-3-hydroxytetradecanoyl-[acyl-carrier-protein] and UDP-N-acetyl-alpha-D-glucosamine: step 6/6.</text>
</comment>
<comment type="similarity">
    <text evidence="1">Belongs to the LpxK family.</text>
</comment>
<name>LPXK_PHOV8</name>
<gene>
    <name evidence="1" type="primary">lpxK</name>
    <name type="ordered locus">BVU_1603</name>
</gene>
<feature type="chain" id="PRO_0000340823" description="Tetraacyldisaccharide 4'-kinase">
    <location>
        <begin position="1"/>
        <end position="366"/>
    </location>
</feature>
<feature type="binding site" evidence="1">
    <location>
        <begin position="51"/>
        <end position="58"/>
    </location>
    <ligand>
        <name>ATP</name>
        <dbReference type="ChEBI" id="CHEBI:30616"/>
    </ligand>
</feature>
<keyword id="KW-0067">ATP-binding</keyword>
<keyword id="KW-0418">Kinase</keyword>
<keyword id="KW-0441">Lipid A biosynthesis</keyword>
<keyword id="KW-0444">Lipid biosynthesis</keyword>
<keyword id="KW-0443">Lipid metabolism</keyword>
<keyword id="KW-0547">Nucleotide-binding</keyword>
<keyword id="KW-0808">Transferase</keyword>
<reference key="1">
    <citation type="journal article" date="2007" name="PLoS Biol.">
        <title>Evolution of symbiotic bacteria in the distal human intestine.</title>
        <authorList>
            <person name="Xu J."/>
            <person name="Mahowald M.A."/>
            <person name="Ley R.E."/>
            <person name="Lozupone C.A."/>
            <person name="Hamady M."/>
            <person name="Martens E.C."/>
            <person name="Henrissat B."/>
            <person name="Coutinho P.M."/>
            <person name="Minx P."/>
            <person name="Latreille P."/>
            <person name="Cordum H."/>
            <person name="Van Brunt A."/>
            <person name="Kim K."/>
            <person name="Fulton R.S."/>
            <person name="Fulton L.A."/>
            <person name="Clifton S.W."/>
            <person name="Wilson R.K."/>
            <person name="Knight R.D."/>
            <person name="Gordon J.I."/>
        </authorList>
    </citation>
    <scope>NUCLEOTIDE SEQUENCE [LARGE SCALE GENOMIC DNA]</scope>
    <source>
        <strain>ATCC 8482 / DSM 1447 / JCM 5826 / CCUG 4940 / NBRC 14291 / NCTC 11154</strain>
    </source>
</reference>
<sequence>MEGNLIKINKWLYPVSWIYGTGVWLRNKLFDWGIYKERKFDIPVISVGNITVGGTGKTPHTEYLIRLLQKDYKVAVLSRGYKRKSKGFVLARPDTSVQMIGDEPFQMKQKFPDIHMAVDRDRCHGIEQLCNSHIAPGTEVIILDDAFQHRYVKPGINILLVDYHRLICEDTLLPAGRMREPENGKSRAHIVIVTKCPKDITPMDLRVLSKQMELYPYQQLYFTTLTYGKLHPLFTAGNAVSLKEIEKDKHILLVTGIASPAKLIQDLSPYNEHIESLAFSDHHDFTARDMELIKKRFMKLPEGKRMIITTEKDSVRLAAHPLMDEMLKPYIYMLPIEVAFLQDQQELFNSNITDYVRKNSRNSNFS</sequence>
<proteinExistence type="inferred from homology"/>